<feature type="signal peptide" evidence="2">
    <location>
        <begin position="1"/>
        <end position="19"/>
    </location>
</feature>
<feature type="chain" id="PRO_0000394374" description="Probable rhamnogalacturonate lyase B">
    <location>
        <begin position="20"/>
        <end position="663"/>
    </location>
</feature>
<feature type="glycosylation site" description="N-linked (GlcNAc...) asparagine" evidence="2">
    <location>
        <position position="27"/>
    </location>
</feature>
<feature type="glycosylation site" description="N-linked (GlcNAc...) asparagine" evidence="2">
    <location>
        <position position="110"/>
    </location>
</feature>
<feature type="glycosylation site" description="N-linked (GlcNAc...) asparagine" evidence="2">
    <location>
        <position position="143"/>
    </location>
</feature>
<feature type="glycosylation site" description="N-linked (GlcNAc...) asparagine" evidence="2">
    <location>
        <position position="239"/>
    </location>
</feature>
<feature type="glycosylation site" description="N-linked (GlcNAc...) asparagine" evidence="2">
    <location>
        <position position="285"/>
    </location>
</feature>
<feature type="glycosylation site" description="N-linked (GlcNAc...) asparagine" evidence="2">
    <location>
        <position position="495"/>
    </location>
</feature>
<feature type="glycosylation site" description="N-linked (GlcNAc...) asparagine" evidence="2">
    <location>
        <position position="535"/>
    </location>
</feature>
<feature type="glycosylation site" description="N-linked (GlcNAc...) asparagine" evidence="2">
    <location>
        <position position="569"/>
    </location>
</feature>
<feature type="glycosylation site" description="N-linked (GlcNAc...) asparagine" evidence="2">
    <location>
        <position position="597"/>
    </location>
</feature>
<feature type="glycosylation site" description="N-linked (GlcNAc...) asparagine" evidence="2">
    <location>
        <position position="638"/>
    </location>
</feature>
<sequence length="663" mass="73556">MRLRTSLGVASACASVASAALKVTEDNSTITLANDRLTSTFAKDKGRVSELFLDGQDLLGPISGNTGVGPYLDCYCIPSGFYTAGSTDPRLEVVQGTDSTGTKYAGVILNDTYTPTGQQFQQYWFLRDGETGLHTFSRLAYYNETTPFLRNLQEFRTLFRPNTELWTHLTSSEAQTAPLPSKEAIANEVVVQDATWRFNNTPNDAYYTQFSEYFTKYTFSNLWRDNSVHGLYADGTNSNGTTYGAWLVMNTKDTYYGGPLHSDLTVDGIVYNYLVSNHHGEGTPNITNGFDRTFGPQYYLFNGGKGSKSSLEDLRSEAETLADPGWNADFYDSIAKHVIGYAPSSKRGSVQGQVKLPKGSTRPIAILTVDGQYFQDNSVEASSHQYWAEMGQDGTFQLDHVKEGKYRLTVFADGIFGDFVHDGVEVQAGKVTKVQETWEQESAGVEVWRLGTPDKSSGEFLHGDAPDPTHPLHPPQHFIYWGAYDWQQDFPNGVNYTIGSSDPAVDFNTVHWSVYGPTPANPDVEYDTTHDWTINFSLDKKQLQQRKTATLTIQLAGAKTAAGNTDVYNATEPYANLALESYINEQKEPLTLLVGFNQSSSCIVRSAVSCYQVRSRMEFPADWLNVGNNVLTLHLPRNATDYETAVLPGTVYVQYDALRLELA</sequence>
<organism>
    <name type="scientific">Aspergillus flavus (strain ATCC 200026 / FGSC A1120 / IAM 13836 / NRRL 3357 / JCM 12722 / SRRC 167)</name>
    <dbReference type="NCBI Taxonomy" id="332952"/>
    <lineage>
        <taxon>Eukaryota</taxon>
        <taxon>Fungi</taxon>
        <taxon>Dikarya</taxon>
        <taxon>Ascomycota</taxon>
        <taxon>Pezizomycotina</taxon>
        <taxon>Eurotiomycetes</taxon>
        <taxon>Eurotiomycetidae</taxon>
        <taxon>Eurotiales</taxon>
        <taxon>Aspergillaceae</taxon>
        <taxon>Aspergillus</taxon>
        <taxon>Aspergillus subgen. Circumdati</taxon>
    </lineage>
</organism>
<gene>
    <name type="primary">rglB</name>
    <name type="ORF">AFLA_014290</name>
</gene>
<keyword id="KW-0119">Carbohydrate metabolism</keyword>
<keyword id="KW-0961">Cell wall biogenesis/degradation</keyword>
<keyword id="KW-0325">Glycoprotein</keyword>
<keyword id="KW-0456">Lyase</keyword>
<keyword id="KW-0624">Polysaccharide degradation</keyword>
<keyword id="KW-0964">Secreted</keyword>
<keyword id="KW-0732">Signal</keyword>
<reference key="1">
    <citation type="journal article" date="2015" name="Genome Announc.">
        <title>Genome sequence of Aspergillus flavus NRRL 3357, a strain that causes aflatoxin contamination of food and feed.</title>
        <authorList>
            <person name="Nierman W.C."/>
            <person name="Yu J."/>
            <person name="Fedorova-Abrams N.D."/>
            <person name="Losada L."/>
            <person name="Cleveland T.E."/>
            <person name="Bhatnagar D."/>
            <person name="Bennett J.W."/>
            <person name="Dean R."/>
            <person name="Payne G.A."/>
        </authorList>
    </citation>
    <scope>NUCLEOTIDE SEQUENCE [LARGE SCALE GENOMIC DNA]</scope>
    <source>
        <strain>ATCC 200026 / FGSC A1120 / IAM 13836 / NRRL 3357 / JCM 12722 / SRRC 167</strain>
    </source>
</reference>
<proteinExistence type="inferred from homology"/>
<protein>
    <recommendedName>
        <fullName>Probable rhamnogalacturonate lyase B</fullName>
        <ecNumber>4.2.2.23</ecNumber>
    </recommendedName>
</protein>
<accession>B8N5T6</accession>
<comment type="function">
    <text evidence="1">Pectinolytic enzymes consist of four classes of enzymes: pectin lyase, polygalacturonase, pectin methylesterase and rhamnogalacturonase. Degrades the rhamnogalacturonan I (RG-I) backbone of pectin (By similarity).</text>
</comment>
<comment type="catalytic activity">
    <reaction>
        <text>Endotype eliminative cleavage of L-alpha-rhamnopyranosyl-(1-&gt;4)-alpha-D-galactopyranosyluronic acid bonds of rhamnogalacturonan I domains in ramified hairy regions of pectin leaving L-rhamnopyranose at the reducing end and 4-deoxy-4,5-unsaturated D-galactopyranosyluronic acid at the non-reducing end.</text>
        <dbReference type="EC" id="4.2.2.23"/>
    </reaction>
</comment>
<comment type="subcellular location">
    <subcellularLocation>
        <location evidence="1">Secreted</location>
    </subcellularLocation>
</comment>
<comment type="similarity">
    <text evidence="3">Belongs to the polysaccharide lyase 4 family.</text>
</comment>
<evidence type="ECO:0000250" key="1"/>
<evidence type="ECO:0000255" key="2"/>
<evidence type="ECO:0000305" key="3"/>
<name>RGLB_ASPFN</name>
<dbReference type="EC" id="4.2.2.23"/>
<dbReference type="EMBL" id="EQ963474">
    <property type="protein sequence ID" value="EED54177.1"/>
    <property type="molecule type" value="Genomic_DNA"/>
</dbReference>
<dbReference type="RefSeq" id="XP_002375449.1">
    <property type="nucleotide sequence ID" value="XM_002375408.1"/>
</dbReference>
<dbReference type="SMR" id="B8N5T6"/>
<dbReference type="STRING" id="332952.B8N5T6"/>
<dbReference type="GlyCosmos" id="B8N5T6">
    <property type="glycosylation" value="10 sites, No reported glycans"/>
</dbReference>
<dbReference type="EnsemblFungi" id="EED54177">
    <property type="protein sequence ID" value="EED54177"/>
    <property type="gene ID" value="AFLA_014290"/>
</dbReference>
<dbReference type="VEuPathDB" id="FungiDB:AFLA_001858"/>
<dbReference type="eggNOG" id="ENOG502QQM5">
    <property type="taxonomic scope" value="Eukaryota"/>
</dbReference>
<dbReference type="HOGENOM" id="CLU_016624_0_0_1"/>
<dbReference type="OMA" id="ATWYLGN"/>
<dbReference type="GO" id="GO:0005576">
    <property type="term" value="C:extracellular region"/>
    <property type="evidence" value="ECO:0007669"/>
    <property type="project" value="UniProtKB-SubCell"/>
</dbReference>
<dbReference type="GO" id="GO:0030246">
    <property type="term" value="F:carbohydrate binding"/>
    <property type="evidence" value="ECO:0007669"/>
    <property type="project" value="InterPro"/>
</dbReference>
<dbReference type="GO" id="GO:0102210">
    <property type="term" value="F:rhamnogalacturonan endolyase activity"/>
    <property type="evidence" value="ECO:0007669"/>
    <property type="project" value="UniProtKB-EC"/>
</dbReference>
<dbReference type="GO" id="GO:0071555">
    <property type="term" value="P:cell wall organization"/>
    <property type="evidence" value="ECO:0007669"/>
    <property type="project" value="UniProtKB-KW"/>
</dbReference>
<dbReference type="GO" id="GO:0000272">
    <property type="term" value="P:polysaccharide catabolic process"/>
    <property type="evidence" value="ECO:0007669"/>
    <property type="project" value="UniProtKB-KW"/>
</dbReference>
<dbReference type="CDD" id="cd10317">
    <property type="entry name" value="RGL4_C"/>
    <property type="match status" value="1"/>
</dbReference>
<dbReference type="CDD" id="cd10316">
    <property type="entry name" value="RGL4_M"/>
    <property type="match status" value="1"/>
</dbReference>
<dbReference type="CDD" id="cd10320">
    <property type="entry name" value="RGL4_N"/>
    <property type="match status" value="1"/>
</dbReference>
<dbReference type="Gene3D" id="2.70.98.10">
    <property type="match status" value="1"/>
</dbReference>
<dbReference type="Gene3D" id="2.60.40.1120">
    <property type="entry name" value="Carboxypeptidase-like, regulatory domain"/>
    <property type="match status" value="1"/>
</dbReference>
<dbReference type="Gene3D" id="2.60.120.260">
    <property type="entry name" value="Galactose-binding domain-like"/>
    <property type="match status" value="1"/>
</dbReference>
<dbReference type="InterPro" id="IPR013784">
    <property type="entry name" value="Carb-bd-like_fold"/>
</dbReference>
<dbReference type="InterPro" id="IPR011013">
    <property type="entry name" value="Gal_mutarotase_sf_dom"/>
</dbReference>
<dbReference type="InterPro" id="IPR008979">
    <property type="entry name" value="Galactose-bd-like_sf"/>
</dbReference>
<dbReference type="InterPro" id="IPR014718">
    <property type="entry name" value="GH-type_carb-bd"/>
</dbReference>
<dbReference type="InterPro" id="IPR051850">
    <property type="entry name" value="Polysacch_Lyase_4"/>
</dbReference>
<dbReference type="InterPro" id="IPR029413">
    <property type="entry name" value="RG-lyase_II"/>
</dbReference>
<dbReference type="InterPro" id="IPR029411">
    <property type="entry name" value="RG-lyase_III"/>
</dbReference>
<dbReference type="PANTHER" id="PTHR32018:SF9">
    <property type="entry name" value="RHAMNOGALACTURONATE LYASE B"/>
    <property type="match status" value="1"/>
</dbReference>
<dbReference type="PANTHER" id="PTHR32018">
    <property type="entry name" value="RHAMNOGALACTURONATE LYASE FAMILY PROTEIN"/>
    <property type="match status" value="1"/>
</dbReference>
<dbReference type="Pfam" id="PF14683">
    <property type="entry name" value="CBM-like"/>
    <property type="match status" value="1"/>
</dbReference>
<dbReference type="Pfam" id="PF14686">
    <property type="entry name" value="fn3_3"/>
    <property type="match status" value="1"/>
</dbReference>
<dbReference type="SUPFAM" id="SSF74650">
    <property type="entry name" value="Galactose mutarotase-like"/>
    <property type="match status" value="1"/>
</dbReference>
<dbReference type="SUPFAM" id="SSF49785">
    <property type="entry name" value="Galactose-binding domain-like"/>
    <property type="match status" value="1"/>
</dbReference>
<dbReference type="SUPFAM" id="SSF49452">
    <property type="entry name" value="Starch-binding domain-like"/>
    <property type="match status" value="1"/>
</dbReference>